<comment type="function">
    <text evidence="1">Protein ADP-ribosyl hydrolase that specifically removes mono-ADP-ribosyl modifications from protein arginine residues.</text>
</comment>
<comment type="catalytic activity">
    <reaction evidence="1">
        <text>N(omega)-(ADP-D-ribosyl)-L-arginyl-[protein] + H2O = ADP-D-ribose + L-arginyl-[protein]</text>
        <dbReference type="Rhea" id="RHEA:14885"/>
        <dbReference type="Rhea" id="RHEA-COMP:10532"/>
        <dbReference type="Rhea" id="RHEA-COMP:15087"/>
        <dbReference type="ChEBI" id="CHEBI:15377"/>
        <dbReference type="ChEBI" id="CHEBI:29965"/>
        <dbReference type="ChEBI" id="CHEBI:57967"/>
        <dbReference type="ChEBI" id="CHEBI:142554"/>
        <dbReference type="EC" id="3.2.2.19"/>
    </reaction>
</comment>
<comment type="catalytic activity">
    <reaction evidence="1">
        <text>N(omega)-(ADP-D-ribosyl)-L-arginine + H2O = ADP-D-ribose + L-arginine</text>
        <dbReference type="Rhea" id="RHEA:20784"/>
        <dbReference type="ChEBI" id="CHEBI:15377"/>
        <dbReference type="ChEBI" id="CHEBI:32682"/>
        <dbReference type="ChEBI" id="CHEBI:57967"/>
        <dbReference type="ChEBI" id="CHEBI:60267"/>
        <dbReference type="EC" id="3.2.2.19"/>
    </reaction>
</comment>
<sequence length="505" mass="56911">MSTFGAEVDQVWPAVTGDSPHLTNFGRKLLKDCRQVQKPIGGYENLGNVIKLSAEFPLEFGVNSVKVYRQSPSRLARINEEVASAYPLIHERTLGLYLQYLEHKCRWGNAVEKPIYRNLSLCGFVQRLLVKRCASFFARNDKYLLVSGESGASGFEAVGTREEKAPLVLANVLSYDDIKLSALLSVSSRTEFVNEGERTNCGHVDLNTKTLERHGVIVGMIGARLSRRNLMEFQDIVIARQQNTRERGYGMALDEPATTRDEDYRRLWREFYATRDLIHGQAVIDNQRFGPSKNKMDVFDNLVMKRRYAISFDMLLLEAEARAKRVKKLAYIHVVGFGLGVWKAAEQQERIFMETFEQRMRTLGNRLNNVGLVHFSWFSITHCGGLSNGSLIEIPGHPKDGIRVLISKRNPARKLSDPEHAGMLLVVSYAWDGNALPGNEFWMKMLQSTGDSSTACSTLVAELHNPYINTKFCNGGNLHIASPEHGVLHIAEYAKRVIRSESDAL</sequence>
<reference evidence="5" key="1">
    <citation type="journal article" date="2000" name="Science">
        <title>The genome sequence of Drosophila melanogaster.</title>
        <authorList>
            <person name="Adams M.D."/>
            <person name="Celniker S.E."/>
            <person name="Holt R.A."/>
            <person name="Evans C.A."/>
            <person name="Gocayne J.D."/>
            <person name="Amanatides P.G."/>
            <person name="Scherer S.E."/>
            <person name="Li P.W."/>
            <person name="Hoskins R.A."/>
            <person name="Galle R.F."/>
            <person name="George R.A."/>
            <person name="Lewis S.E."/>
            <person name="Richards S."/>
            <person name="Ashburner M."/>
            <person name="Henderson S.N."/>
            <person name="Sutton G.G."/>
            <person name="Wortman J.R."/>
            <person name="Yandell M.D."/>
            <person name="Zhang Q."/>
            <person name="Chen L.X."/>
            <person name="Brandon R.C."/>
            <person name="Rogers Y.-H.C."/>
            <person name="Blazej R.G."/>
            <person name="Champe M."/>
            <person name="Pfeiffer B.D."/>
            <person name="Wan K.H."/>
            <person name="Doyle C."/>
            <person name="Baxter E.G."/>
            <person name="Helt G."/>
            <person name="Nelson C.R."/>
            <person name="Miklos G.L.G."/>
            <person name="Abril J.F."/>
            <person name="Agbayani A."/>
            <person name="An H.-J."/>
            <person name="Andrews-Pfannkoch C."/>
            <person name="Baldwin D."/>
            <person name="Ballew R.M."/>
            <person name="Basu A."/>
            <person name="Baxendale J."/>
            <person name="Bayraktaroglu L."/>
            <person name="Beasley E.M."/>
            <person name="Beeson K.Y."/>
            <person name="Benos P.V."/>
            <person name="Berman B.P."/>
            <person name="Bhandari D."/>
            <person name="Bolshakov S."/>
            <person name="Borkova D."/>
            <person name="Botchan M.R."/>
            <person name="Bouck J."/>
            <person name="Brokstein P."/>
            <person name="Brottier P."/>
            <person name="Burtis K.C."/>
            <person name="Busam D.A."/>
            <person name="Butler H."/>
            <person name="Cadieu E."/>
            <person name="Center A."/>
            <person name="Chandra I."/>
            <person name="Cherry J.M."/>
            <person name="Cawley S."/>
            <person name="Dahlke C."/>
            <person name="Davenport L.B."/>
            <person name="Davies P."/>
            <person name="de Pablos B."/>
            <person name="Delcher A."/>
            <person name="Deng Z."/>
            <person name="Mays A.D."/>
            <person name="Dew I."/>
            <person name="Dietz S.M."/>
            <person name="Dodson K."/>
            <person name="Doup L.E."/>
            <person name="Downes M."/>
            <person name="Dugan-Rocha S."/>
            <person name="Dunkov B.C."/>
            <person name="Dunn P."/>
            <person name="Durbin K.J."/>
            <person name="Evangelista C.C."/>
            <person name="Ferraz C."/>
            <person name="Ferriera S."/>
            <person name="Fleischmann W."/>
            <person name="Fosler C."/>
            <person name="Gabrielian A.E."/>
            <person name="Garg N.S."/>
            <person name="Gelbart W.M."/>
            <person name="Glasser K."/>
            <person name="Glodek A."/>
            <person name="Gong F."/>
            <person name="Gorrell J.H."/>
            <person name="Gu Z."/>
            <person name="Guan P."/>
            <person name="Harris M."/>
            <person name="Harris N.L."/>
            <person name="Harvey D.A."/>
            <person name="Heiman T.J."/>
            <person name="Hernandez J.R."/>
            <person name="Houck J."/>
            <person name="Hostin D."/>
            <person name="Houston K.A."/>
            <person name="Howland T.J."/>
            <person name="Wei M.-H."/>
            <person name="Ibegwam C."/>
            <person name="Jalali M."/>
            <person name="Kalush F."/>
            <person name="Karpen G.H."/>
            <person name="Ke Z."/>
            <person name="Kennison J.A."/>
            <person name="Ketchum K.A."/>
            <person name="Kimmel B.E."/>
            <person name="Kodira C.D."/>
            <person name="Kraft C.L."/>
            <person name="Kravitz S."/>
            <person name="Kulp D."/>
            <person name="Lai Z."/>
            <person name="Lasko P."/>
            <person name="Lei Y."/>
            <person name="Levitsky A.A."/>
            <person name="Li J.H."/>
            <person name="Li Z."/>
            <person name="Liang Y."/>
            <person name="Lin X."/>
            <person name="Liu X."/>
            <person name="Mattei B."/>
            <person name="McIntosh T.C."/>
            <person name="McLeod M.P."/>
            <person name="McPherson D."/>
            <person name="Merkulov G."/>
            <person name="Milshina N.V."/>
            <person name="Mobarry C."/>
            <person name="Morris J."/>
            <person name="Moshrefi A."/>
            <person name="Mount S.M."/>
            <person name="Moy M."/>
            <person name="Murphy B."/>
            <person name="Murphy L."/>
            <person name="Muzny D.M."/>
            <person name="Nelson D.L."/>
            <person name="Nelson D.R."/>
            <person name="Nelson K.A."/>
            <person name="Nixon K."/>
            <person name="Nusskern D.R."/>
            <person name="Pacleb J.M."/>
            <person name="Palazzolo M."/>
            <person name="Pittman G.S."/>
            <person name="Pan S."/>
            <person name="Pollard J."/>
            <person name="Puri V."/>
            <person name="Reese M.G."/>
            <person name="Reinert K."/>
            <person name="Remington K."/>
            <person name="Saunders R.D.C."/>
            <person name="Scheeler F."/>
            <person name="Shen H."/>
            <person name="Shue B.C."/>
            <person name="Siden-Kiamos I."/>
            <person name="Simpson M."/>
            <person name="Skupski M.P."/>
            <person name="Smith T.J."/>
            <person name="Spier E."/>
            <person name="Spradling A.C."/>
            <person name="Stapleton M."/>
            <person name="Strong R."/>
            <person name="Sun E."/>
            <person name="Svirskas R."/>
            <person name="Tector C."/>
            <person name="Turner R."/>
            <person name="Venter E."/>
            <person name="Wang A.H."/>
            <person name="Wang X."/>
            <person name="Wang Z.-Y."/>
            <person name="Wassarman D.A."/>
            <person name="Weinstock G.M."/>
            <person name="Weissenbach J."/>
            <person name="Williams S.M."/>
            <person name="Woodage T."/>
            <person name="Worley K.C."/>
            <person name="Wu D."/>
            <person name="Yang S."/>
            <person name="Yao Q.A."/>
            <person name="Ye J."/>
            <person name="Yeh R.-F."/>
            <person name="Zaveri J.S."/>
            <person name="Zhan M."/>
            <person name="Zhang G."/>
            <person name="Zhao Q."/>
            <person name="Zheng L."/>
            <person name="Zheng X.H."/>
            <person name="Zhong F.N."/>
            <person name="Zhong W."/>
            <person name="Zhou X."/>
            <person name="Zhu S.C."/>
            <person name="Zhu X."/>
            <person name="Smith H.O."/>
            <person name="Gibbs R.A."/>
            <person name="Myers E.W."/>
            <person name="Rubin G.M."/>
            <person name="Venter J.C."/>
        </authorList>
    </citation>
    <scope>NUCLEOTIDE SEQUENCE [LARGE SCALE GENOMIC DNA]</scope>
    <source>
        <strain evidence="5">Berkeley</strain>
    </source>
</reference>
<reference evidence="5" key="2">
    <citation type="journal article" date="2002" name="Genome Biol.">
        <title>Annotation of the Drosophila melanogaster euchromatic genome: a systematic review.</title>
        <authorList>
            <person name="Misra S."/>
            <person name="Crosby M.A."/>
            <person name="Mungall C.J."/>
            <person name="Matthews B.B."/>
            <person name="Campbell K.S."/>
            <person name="Hradecky P."/>
            <person name="Huang Y."/>
            <person name="Kaminker J.S."/>
            <person name="Millburn G.H."/>
            <person name="Prochnik S.E."/>
            <person name="Smith C.D."/>
            <person name="Tupy J.L."/>
            <person name="Whitfield E.J."/>
            <person name="Bayraktaroglu L."/>
            <person name="Berman B.P."/>
            <person name="Bettencourt B.R."/>
            <person name="Celniker S.E."/>
            <person name="de Grey A.D.N.J."/>
            <person name="Drysdale R.A."/>
            <person name="Harris N.L."/>
            <person name="Richter J."/>
            <person name="Russo S."/>
            <person name="Schroeder A.J."/>
            <person name="Shu S.Q."/>
            <person name="Stapleton M."/>
            <person name="Yamada C."/>
            <person name="Ashburner M."/>
            <person name="Gelbart W.M."/>
            <person name="Rubin G.M."/>
            <person name="Lewis S.E."/>
        </authorList>
    </citation>
    <scope>GENOME REANNOTATION</scope>
    <source>
        <strain evidence="5">Berkeley</strain>
    </source>
</reference>
<reference evidence="3" key="3">
    <citation type="journal article" date="2002" name="Genome Biol.">
        <title>A Drosophila full-length cDNA resource.</title>
        <authorList>
            <person name="Stapleton M."/>
            <person name="Carlson J.W."/>
            <person name="Brokstein P."/>
            <person name="Yu C."/>
            <person name="Champe M."/>
            <person name="George R.A."/>
            <person name="Guarin H."/>
            <person name="Kronmiller B."/>
            <person name="Pacleb J.M."/>
            <person name="Park S."/>
            <person name="Wan K.H."/>
            <person name="Rubin G.M."/>
            <person name="Celniker S.E."/>
        </authorList>
    </citation>
    <scope>NUCLEOTIDE SEQUENCE [LARGE SCALE MRNA]</scope>
    <source>
        <strain evidence="3">Berkeley</strain>
        <tissue evidence="3">Embryo</tissue>
    </source>
</reference>
<reference evidence="6" key="4">
    <citation type="journal article" date="2024" name="Nat. Commun.">
        <title>Legionella metaeffector MavL reverses ubiquitin ADP-ribosylation via a conserved arginine-specific macrodomain.</title>
        <authorList>
            <person name="Zhang Z."/>
            <person name="Fu J."/>
            <person name="Rack J.G.M."/>
            <person name="Li C."/>
            <person name="Voorneveld J."/>
            <person name="Filippov D.V."/>
            <person name="Ahel I."/>
            <person name="Luo Z.Q."/>
            <person name="Das C."/>
        </authorList>
    </citation>
    <scope>X-RAY CRYSTALLOGRAPHY (2.28 ANGSTROMS) OF 12-498</scope>
    <scope>FUNCTION</scope>
    <scope>CATALYTIC ACTIVITY</scope>
</reference>
<evidence type="ECO:0000269" key="1">
    <source>
    </source>
</evidence>
<evidence type="ECO:0000305" key="2"/>
<evidence type="ECO:0000312" key="3">
    <source>
        <dbReference type="EMBL" id="AAL49098.1"/>
    </source>
</evidence>
<evidence type="ECO:0000312" key="4">
    <source>
        <dbReference type="FlyBase" id="FBgn0030189"/>
    </source>
</evidence>
<evidence type="ECO:0000312" key="5">
    <source>
        <dbReference type="Proteomes" id="UP000000803"/>
    </source>
</evidence>
<evidence type="ECO:0007744" key="6">
    <source>
        <dbReference type="PDB" id="8DMT"/>
    </source>
</evidence>
<evidence type="ECO:0007829" key="7">
    <source>
        <dbReference type="PDB" id="8DMT"/>
    </source>
</evidence>
<accession>Q9W2W5</accession>
<dbReference type="EC" id="3.2.2.19" evidence="1"/>
<dbReference type="EMBL" id="AE014298">
    <property type="protein sequence ID" value="AAF46572.1"/>
    <property type="molecule type" value="Genomic_DNA"/>
</dbReference>
<dbReference type="EMBL" id="AY071476">
    <property type="protein sequence ID" value="AAL49098.1"/>
    <property type="molecule type" value="mRNA"/>
</dbReference>
<dbReference type="RefSeq" id="NP_572616.1">
    <property type="nucleotide sequence ID" value="NM_132388.4"/>
</dbReference>
<dbReference type="PDB" id="8DMT">
    <property type="method" value="X-ray"/>
    <property type="resolution" value="2.28 A"/>
    <property type="chains" value="A/B/C/D=12-498"/>
</dbReference>
<dbReference type="PDBsum" id="8DMT"/>
<dbReference type="SMR" id="Q9W2W5"/>
<dbReference type="IntAct" id="Q9W2W5">
    <property type="interactions" value="1"/>
</dbReference>
<dbReference type="STRING" id="7227.FBpp0071376"/>
<dbReference type="PaxDb" id="7227-FBpp0071376"/>
<dbReference type="DNASU" id="31958"/>
<dbReference type="EnsemblMetazoa" id="FBtr0071441">
    <property type="protein sequence ID" value="FBpp0071376"/>
    <property type="gene ID" value="FBgn0030189"/>
</dbReference>
<dbReference type="GeneID" id="31958"/>
<dbReference type="KEGG" id="dme:Dmel_CG2909"/>
<dbReference type="UCSC" id="CG2909-RA">
    <property type="organism name" value="d. melanogaster"/>
</dbReference>
<dbReference type="AGR" id="FB:FBgn0030189"/>
<dbReference type="FlyBase" id="FBgn0030189">
    <property type="gene designation" value="CG2909"/>
</dbReference>
<dbReference type="VEuPathDB" id="VectorBase:FBgn0030189"/>
<dbReference type="eggNOG" id="ENOG502QV0E">
    <property type="taxonomic scope" value="Eukaryota"/>
</dbReference>
<dbReference type="GeneTree" id="ENSGT00540000073774"/>
<dbReference type="HOGENOM" id="CLU_042117_0_0_1"/>
<dbReference type="OMA" id="TECINNG"/>
<dbReference type="OrthoDB" id="6357136at2759"/>
<dbReference type="BioGRID-ORCS" id="31958">
    <property type="hits" value="0 hits in 1 CRISPR screen"/>
</dbReference>
<dbReference type="Proteomes" id="UP000000803">
    <property type="component" value="Chromosome X"/>
</dbReference>
<dbReference type="Bgee" id="FBgn0030189">
    <property type="expression patterns" value="Expressed in adult tracheocyte (Drosophila) in open tracheal system trachea and 76 other cell types or tissues"/>
</dbReference>
<dbReference type="GO" id="GO:0003875">
    <property type="term" value="F:ADP-ribosylarginine hydrolase activity"/>
    <property type="evidence" value="ECO:0000314"/>
    <property type="project" value="FlyBase"/>
</dbReference>
<dbReference type="InterPro" id="IPR032063">
    <property type="entry name" value="MavL-like"/>
</dbReference>
<dbReference type="Pfam" id="PF16062">
    <property type="entry name" value="MavL-like"/>
    <property type="match status" value="1"/>
</dbReference>
<feature type="chain" id="PRO_0000461644" description="ADP-ribosylarginine hydrolase CG2909">
    <location>
        <begin position="1"/>
        <end position="505"/>
    </location>
</feature>
<feature type="binding site" evidence="1 6">
    <location>
        <position position="198"/>
    </location>
    <ligand>
        <name>ADP-D-ribose</name>
        <dbReference type="ChEBI" id="CHEBI:57967"/>
    </ligand>
    <ligandPart>
        <name>adenine group</name>
        <dbReference type="ChEBI" id="CHEBI:30756"/>
    </ligandPart>
</feature>
<feature type="binding site" evidence="1 6">
    <location>
        <position position="336"/>
    </location>
    <ligand>
        <name>ADP-D-ribose</name>
        <dbReference type="ChEBI" id="CHEBI:57967"/>
    </ligand>
    <ligandPart>
        <name>diphosphate group</name>
        <dbReference type="ChEBI" id="CHEBI:68549"/>
    </ligandPart>
</feature>
<feature type="binding site" evidence="1 6">
    <location>
        <position position="338"/>
    </location>
    <ligand>
        <name>ADP-D-ribose</name>
        <dbReference type="ChEBI" id="CHEBI:57967"/>
    </ligand>
    <ligandPart>
        <name>diphosphate group</name>
        <dbReference type="ChEBI" id="CHEBI:68549"/>
    </ligandPart>
</feature>
<feature type="binding site" evidence="1 6">
    <location>
        <position position="340"/>
    </location>
    <ligand>
        <name>ADP-D-ribose</name>
        <dbReference type="ChEBI" id="CHEBI:57967"/>
    </ligand>
    <ligandPart>
        <name>diphosphate group</name>
        <dbReference type="ChEBI" id="CHEBI:68549"/>
    </ligandPart>
</feature>
<feature type="binding site" evidence="1 6">
    <location>
        <position position="341"/>
    </location>
    <ligand>
        <name>ADP-D-ribose</name>
        <dbReference type="ChEBI" id="CHEBI:57967"/>
    </ligand>
    <ligandPart>
        <name>diphosphate group</name>
        <dbReference type="ChEBI" id="CHEBI:68549"/>
    </ligandPart>
</feature>
<feature type="binding site" evidence="1 6">
    <location>
        <position position="342"/>
    </location>
    <ligand>
        <name>ADP-D-ribose</name>
        <dbReference type="ChEBI" id="CHEBI:57967"/>
    </ligand>
    <ligandPart>
        <name>diphosphate group</name>
        <dbReference type="ChEBI" id="CHEBI:68549"/>
    </ligandPart>
</feature>
<feature type="binding site" evidence="1 6">
    <location>
        <position position="377"/>
    </location>
    <ligand>
        <name>ADP-D-ribose</name>
        <dbReference type="ChEBI" id="CHEBI:57967"/>
    </ligand>
    <ligandPart>
        <name>adenine group</name>
        <dbReference type="ChEBI" id="CHEBI:30756"/>
    </ligandPart>
</feature>
<feature type="binding site" evidence="1 6">
    <location>
        <position position="432"/>
    </location>
    <ligand>
        <name>ADP-D-ribose</name>
        <dbReference type="ChEBI" id="CHEBI:57967"/>
    </ligand>
</feature>
<feature type="binding site" evidence="1 6">
    <location>
        <position position="439"/>
    </location>
    <ligand>
        <name>ADP-D-ribose</name>
        <dbReference type="ChEBI" id="CHEBI:57967"/>
    </ligand>
</feature>
<feature type="binding site" evidence="1 6">
    <location>
        <position position="440"/>
    </location>
    <ligand>
        <name>ADP-D-ribose</name>
        <dbReference type="ChEBI" id="CHEBI:57967"/>
    </ligand>
</feature>
<feature type="binding site" evidence="1 6">
    <location>
        <position position="450"/>
    </location>
    <ligand>
        <name>ADP-D-ribose</name>
        <dbReference type="ChEBI" id="CHEBI:57967"/>
    </ligand>
</feature>
<feature type="binding site" evidence="1 6">
    <location>
        <position position="451"/>
    </location>
    <ligand>
        <name>ADP-D-ribose</name>
        <dbReference type="ChEBI" id="CHEBI:57967"/>
    </ligand>
</feature>
<feature type="strand" evidence="7">
    <location>
        <begin position="15"/>
        <end position="17"/>
    </location>
</feature>
<feature type="helix" evidence="7">
    <location>
        <begin position="24"/>
        <end position="31"/>
    </location>
</feature>
<feature type="helix" evidence="7">
    <location>
        <begin position="32"/>
        <end position="35"/>
    </location>
</feature>
<feature type="helix" evidence="7">
    <location>
        <begin position="45"/>
        <end position="54"/>
    </location>
</feature>
<feature type="helix" evidence="7">
    <location>
        <begin position="67"/>
        <end position="69"/>
    </location>
</feature>
<feature type="helix" evidence="7">
    <location>
        <begin position="72"/>
        <end position="74"/>
    </location>
</feature>
<feature type="helix" evidence="7">
    <location>
        <begin position="75"/>
        <end position="83"/>
    </location>
</feature>
<feature type="strand" evidence="7">
    <location>
        <begin position="86"/>
        <end position="90"/>
    </location>
</feature>
<feature type="helix" evidence="7">
    <location>
        <begin position="91"/>
        <end position="107"/>
    </location>
</feature>
<feature type="turn" evidence="7">
    <location>
        <begin position="110"/>
        <end position="112"/>
    </location>
</feature>
<feature type="helix" evidence="7">
    <location>
        <begin position="113"/>
        <end position="116"/>
    </location>
</feature>
<feature type="helix" evidence="7">
    <location>
        <begin position="121"/>
        <end position="130"/>
    </location>
</feature>
<feature type="strand" evidence="7">
    <location>
        <begin position="131"/>
        <end position="137"/>
    </location>
</feature>
<feature type="turn" evidence="7">
    <location>
        <begin position="138"/>
        <end position="141"/>
    </location>
</feature>
<feature type="strand" evidence="7">
    <location>
        <begin position="142"/>
        <end position="144"/>
    </location>
</feature>
<feature type="strand" evidence="7">
    <location>
        <begin position="150"/>
        <end position="152"/>
    </location>
</feature>
<feature type="turn" evidence="7">
    <location>
        <begin position="156"/>
        <end position="159"/>
    </location>
</feature>
<feature type="turn" evidence="7">
    <location>
        <begin position="169"/>
        <end position="171"/>
    </location>
</feature>
<feature type="helix" evidence="7">
    <location>
        <begin position="175"/>
        <end position="181"/>
    </location>
</feature>
<feature type="strand" evidence="7">
    <location>
        <begin position="185"/>
        <end position="191"/>
    </location>
</feature>
<feature type="strand" evidence="7">
    <location>
        <begin position="209"/>
        <end position="211"/>
    </location>
</feature>
<feature type="strand" evidence="7">
    <location>
        <begin position="214"/>
        <end position="220"/>
    </location>
</feature>
<feature type="helix" evidence="7">
    <location>
        <begin position="233"/>
        <end position="236"/>
    </location>
</feature>
<feature type="turn" evidence="7">
    <location>
        <begin position="240"/>
        <end position="242"/>
    </location>
</feature>
<feature type="helix" evidence="7">
    <location>
        <begin position="245"/>
        <end position="247"/>
    </location>
</feature>
<feature type="helix" evidence="7">
    <location>
        <begin position="260"/>
        <end position="271"/>
    </location>
</feature>
<feature type="turn" evidence="7">
    <location>
        <begin position="279"/>
        <end position="281"/>
    </location>
</feature>
<feature type="strand" evidence="7">
    <location>
        <begin position="286"/>
        <end position="290"/>
    </location>
</feature>
<feature type="strand" evidence="7">
    <location>
        <begin position="298"/>
        <end position="300"/>
    </location>
</feature>
<feature type="helix" evidence="7">
    <location>
        <begin position="301"/>
        <end position="325"/>
    </location>
</feature>
<feature type="strand" evidence="7">
    <location>
        <begin position="330"/>
        <end position="334"/>
    </location>
</feature>
<feature type="helix" evidence="7">
    <location>
        <begin position="348"/>
        <end position="363"/>
    </location>
</feature>
<feature type="helix" evidence="7">
    <location>
        <begin position="364"/>
        <end position="367"/>
    </location>
</feature>
<feature type="strand" evidence="7">
    <location>
        <begin position="370"/>
        <end position="375"/>
    </location>
</feature>
<feature type="strand" evidence="7">
    <location>
        <begin position="381"/>
        <end position="383"/>
    </location>
</feature>
<feature type="strand" evidence="7">
    <location>
        <begin position="391"/>
        <end position="393"/>
    </location>
</feature>
<feature type="strand" evidence="7">
    <location>
        <begin position="400"/>
        <end position="407"/>
    </location>
</feature>
<feature type="strand" evidence="7">
    <location>
        <begin position="424"/>
        <end position="430"/>
    </location>
</feature>
<feature type="helix" evidence="7">
    <location>
        <begin position="439"/>
        <end position="443"/>
    </location>
</feature>
<feature type="strand" evidence="7">
    <location>
        <begin position="447"/>
        <end position="449"/>
    </location>
</feature>
<feature type="helix" evidence="7">
    <location>
        <begin position="450"/>
        <end position="455"/>
    </location>
</feature>
<feature type="helix" evidence="7">
    <location>
        <begin position="460"/>
        <end position="463"/>
    </location>
</feature>
<feature type="turn" evidence="7">
    <location>
        <begin position="466"/>
        <end position="468"/>
    </location>
</feature>
<feature type="turn" evidence="7">
    <location>
        <begin position="470"/>
        <end position="472"/>
    </location>
</feature>
<feature type="helix" evidence="7">
    <location>
        <begin position="475"/>
        <end position="477"/>
    </location>
</feature>
<feature type="strand" evidence="7">
    <location>
        <begin position="479"/>
        <end position="482"/>
    </location>
</feature>
<feature type="turn" evidence="7">
    <location>
        <begin position="483"/>
        <end position="485"/>
    </location>
</feature>
<feature type="strand" evidence="7">
    <location>
        <begin position="486"/>
        <end position="489"/>
    </location>
</feature>
<feature type="helix" evidence="7">
    <location>
        <begin position="490"/>
        <end position="497"/>
    </location>
</feature>
<organism evidence="5">
    <name type="scientific">Drosophila melanogaster</name>
    <name type="common">Fruit fly</name>
    <dbReference type="NCBI Taxonomy" id="7227"/>
    <lineage>
        <taxon>Eukaryota</taxon>
        <taxon>Metazoa</taxon>
        <taxon>Ecdysozoa</taxon>
        <taxon>Arthropoda</taxon>
        <taxon>Hexapoda</taxon>
        <taxon>Insecta</taxon>
        <taxon>Pterygota</taxon>
        <taxon>Neoptera</taxon>
        <taxon>Endopterygota</taxon>
        <taxon>Diptera</taxon>
        <taxon>Brachycera</taxon>
        <taxon>Muscomorpha</taxon>
        <taxon>Ephydroidea</taxon>
        <taxon>Drosophilidae</taxon>
        <taxon>Drosophila</taxon>
        <taxon>Sophophora</taxon>
    </lineage>
</organism>
<gene>
    <name evidence="4" type="ORF">CG2909</name>
</gene>
<keyword id="KW-0002">3D-structure</keyword>
<keyword id="KW-0378">Hydrolase</keyword>
<keyword id="KW-1185">Reference proteome</keyword>
<protein>
    <recommendedName>
        <fullName evidence="2">ADP-ribosylarginine hydrolase CG2909</fullName>
        <ecNumber evidence="1">3.2.2.19</ecNumber>
    </recommendedName>
</protein>
<proteinExistence type="evidence at protein level"/>
<name>ADPR1_DROME</name>